<accession>A4SXM6</accession>
<protein>
    <recommendedName>
        <fullName evidence="1">Ribonuclease H</fullName>
        <shortName evidence="1">RNase H</shortName>
        <ecNumber evidence="1">3.1.26.4</ecNumber>
    </recommendedName>
</protein>
<sequence length="154" mass="17208">MPHSKHPSSHPHIIIYTDGACKGNPGPGGWGAVLRSGSHEKHIHGGEKLTTNNRMEICAVIFALKALKQRSSVELWTDSQYVQKGVTEWLEGWKKRGWKTASKDPVKNADLWQELDTLLPDHDISWHWVRGHNGHPGNELADALANKGVEEFLP</sequence>
<comment type="function">
    <text evidence="1">Endonuclease that specifically degrades the RNA of RNA-DNA hybrids.</text>
</comment>
<comment type="catalytic activity">
    <reaction evidence="1">
        <text>Endonucleolytic cleavage to 5'-phosphomonoester.</text>
        <dbReference type="EC" id="3.1.26.4"/>
    </reaction>
</comment>
<comment type="cofactor">
    <cofactor evidence="1">
        <name>Mg(2+)</name>
        <dbReference type="ChEBI" id="CHEBI:18420"/>
    </cofactor>
    <text evidence="1">Binds 1 Mg(2+) ion per subunit. May bind a second metal ion at a regulatory site, or after substrate binding.</text>
</comment>
<comment type="subunit">
    <text evidence="1">Monomer.</text>
</comment>
<comment type="subcellular location">
    <subcellularLocation>
        <location evidence="1">Cytoplasm</location>
    </subcellularLocation>
</comment>
<comment type="similarity">
    <text evidence="1">Belongs to the RNase H family.</text>
</comment>
<gene>
    <name evidence="1" type="primary">rnhA</name>
    <name type="ordered locus">Pnuc_1024</name>
</gene>
<keyword id="KW-0963">Cytoplasm</keyword>
<keyword id="KW-0255">Endonuclease</keyword>
<keyword id="KW-0378">Hydrolase</keyword>
<keyword id="KW-0460">Magnesium</keyword>
<keyword id="KW-0479">Metal-binding</keyword>
<keyword id="KW-0540">Nuclease</keyword>
<keyword id="KW-1185">Reference proteome</keyword>
<name>RNH_POLAQ</name>
<organism>
    <name type="scientific">Polynucleobacter asymbioticus (strain DSM 18221 / CIP 109841 / QLW-P1DMWA-1)</name>
    <name type="common">Polynucleobacter necessarius subsp. asymbioticus</name>
    <dbReference type="NCBI Taxonomy" id="312153"/>
    <lineage>
        <taxon>Bacteria</taxon>
        <taxon>Pseudomonadati</taxon>
        <taxon>Pseudomonadota</taxon>
        <taxon>Betaproteobacteria</taxon>
        <taxon>Burkholderiales</taxon>
        <taxon>Burkholderiaceae</taxon>
        <taxon>Polynucleobacter</taxon>
    </lineage>
</organism>
<dbReference type="EC" id="3.1.26.4" evidence="1"/>
<dbReference type="EMBL" id="CP000655">
    <property type="protein sequence ID" value="ABP34240.1"/>
    <property type="molecule type" value="Genomic_DNA"/>
</dbReference>
<dbReference type="RefSeq" id="WP_011902865.1">
    <property type="nucleotide sequence ID" value="NC_009379.1"/>
</dbReference>
<dbReference type="SMR" id="A4SXM6"/>
<dbReference type="GeneID" id="31481398"/>
<dbReference type="KEGG" id="pnu:Pnuc_1024"/>
<dbReference type="eggNOG" id="COG0328">
    <property type="taxonomic scope" value="Bacteria"/>
</dbReference>
<dbReference type="HOGENOM" id="CLU_030894_6_0_4"/>
<dbReference type="Proteomes" id="UP000000231">
    <property type="component" value="Chromosome"/>
</dbReference>
<dbReference type="GO" id="GO:0005737">
    <property type="term" value="C:cytoplasm"/>
    <property type="evidence" value="ECO:0007669"/>
    <property type="project" value="UniProtKB-SubCell"/>
</dbReference>
<dbReference type="GO" id="GO:0000287">
    <property type="term" value="F:magnesium ion binding"/>
    <property type="evidence" value="ECO:0007669"/>
    <property type="project" value="UniProtKB-UniRule"/>
</dbReference>
<dbReference type="GO" id="GO:0003676">
    <property type="term" value="F:nucleic acid binding"/>
    <property type="evidence" value="ECO:0007669"/>
    <property type="project" value="InterPro"/>
</dbReference>
<dbReference type="GO" id="GO:0004523">
    <property type="term" value="F:RNA-DNA hybrid ribonuclease activity"/>
    <property type="evidence" value="ECO:0007669"/>
    <property type="project" value="UniProtKB-UniRule"/>
</dbReference>
<dbReference type="GO" id="GO:0043137">
    <property type="term" value="P:DNA replication, removal of RNA primer"/>
    <property type="evidence" value="ECO:0007669"/>
    <property type="project" value="TreeGrafter"/>
</dbReference>
<dbReference type="CDD" id="cd09278">
    <property type="entry name" value="RNase_HI_prokaryote_like"/>
    <property type="match status" value="1"/>
</dbReference>
<dbReference type="FunFam" id="3.30.420.10:FF:000089">
    <property type="entry name" value="Ribonuclease H"/>
    <property type="match status" value="1"/>
</dbReference>
<dbReference type="Gene3D" id="3.30.420.10">
    <property type="entry name" value="Ribonuclease H-like superfamily/Ribonuclease H"/>
    <property type="match status" value="1"/>
</dbReference>
<dbReference type="HAMAP" id="MF_00042">
    <property type="entry name" value="RNase_H"/>
    <property type="match status" value="1"/>
</dbReference>
<dbReference type="InterPro" id="IPR050092">
    <property type="entry name" value="RNase_H"/>
</dbReference>
<dbReference type="InterPro" id="IPR012337">
    <property type="entry name" value="RNaseH-like_sf"/>
</dbReference>
<dbReference type="InterPro" id="IPR002156">
    <property type="entry name" value="RNaseH_domain"/>
</dbReference>
<dbReference type="InterPro" id="IPR036397">
    <property type="entry name" value="RNaseH_sf"/>
</dbReference>
<dbReference type="InterPro" id="IPR022892">
    <property type="entry name" value="RNaseHI"/>
</dbReference>
<dbReference type="NCBIfam" id="NF001236">
    <property type="entry name" value="PRK00203.1"/>
    <property type="match status" value="1"/>
</dbReference>
<dbReference type="PANTHER" id="PTHR10642">
    <property type="entry name" value="RIBONUCLEASE H1"/>
    <property type="match status" value="1"/>
</dbReference>
<dbReference type="PANTHER" id="PTHR10642:SF26">
    <property type="entry name" value="RIBONUCLEASE H1"/>
    <property type="match status" value="1"/>
</dbReference>
<dbReference type="Pfam" id="PF00075">
    <property type="entry name" value="RNase_H"/>
    <property type="match status" value="1"/>
</dbReference>
<dbReference type="SUPFAM" id="SSF53098">
    <property type="entry name" value="Ribonuclease H-like"/>
    <property type="match status" value="1"/>
</dbReference>
<dbReference type="PROSITE" id="PS50879">
    <property type="entry name" value="RNASE_H_1"/>
    <property type="match status" value="1"/>
</dbReference>
<evidence type="ECO:0000255" key="1">
    <source>
        <dbReference type="HAMAP-Rule" id="MF_00042"/>
    </source>
</evidence>
<evidence type="ECO:0000255" key="2">
    <source>
        <dbReference type="PROSITE-ProRule" id="PRU00408"/>
    </source>
</evidence>
<reference key="1">
    <citation type="journal article" date="2012" name="Stand. Genomic Sci.">
        <title>Complete genome sequence of Polynucleobacter necessarius subsp. asymbioticus type strain (QLW-P1DMWA-1(T)).</title>
        <authorList>
            <person name="Meincke L."/>
            <person name="Copeland A."/>
            <person name="Lapidus A."/>
            <person name="Lucas S."/>
            <person name="Berry K.W."/>
            <person name="Del Rio T.G."/>
            <person name="Hammon N."/>
            <person name="Dalin E."/>
            <person name="Tice H."/>
            <person name="Pitluck S."/>
            <person name="Richardson P."/>
            <person name="Bruce D."/>
            <person name="Goodwin L."/>
            <person name="Han C."/>
            <person name="Tapia R."/>
            <person name="Detter J.C."/>
            <person name="Schmutz J."/>
            <person name="Brettin T."/>
            <person name="Larimer F."/>
            <person name="Land M."/>
            <person name="Hauser L."/>
            <person name="Kyrpides N.C."/>
            <person name="Ivanova N."/>
            <person name="Goker M."/>
            <person name="Woyke T."/>
            <person name="Wu Q.L."/>
            <person name="Pockl M."/>
            <person name="Hahn M.W."/>
            <person name="Klenk H.P."/>
        </authorList>
    </citation>
    <scope>NUCLEOTIDE SEQUENCE [LARGE SCALE GENOMIC DNA]</scope>
    <source>
        <strain>DSM 18221 / CIP 109841 / QLW-P1DMWA-1</strain>
    </source>
</reference>
<proteinExistence type="inferred from homology"/>
<feature type="chain" id="PRO_0000332648" description="Ribonuclease H">
    <location>
        <begin position="1"/>
        <end position="154"/>
    </location>
</feature>
<feature type="domain" description="RNase H type-1" evidence="2">
    <location>
        <begin position="9"/>
        <end position="150"/>
    </location>
</feature>
<feature type="binding site" evidence="1">
    <location>
        <position position="18"/>
    </location>
    <ligand>
        <name>Mg(2+)</name>
        <dbReference type="ChEBI" id="CHEBI:18420"/>
        <label>1</label>
    </ligand>
</feature>
<feature type="binding site" evidence="1">
    <location>
        <position position="18"/>
    </location>
    <ligand>
        <name>Mg(2+)</name>
        <dbReference type="ChEBI" id="CHEBI:18420"/>
        <label>2</label>
    </ligand>
</feature>
<feature type="binding site" evidence="1">
    <location>
        <position position="56"/>
    </location>
    <ligand>
        <name>Mg(2+)</name>
        <dbReference type="ChEBI" id="CHEBI:18420"/>
        <label>1</label>
    </ligand>
</feature>
<feature type="binding site" evidence="1">
    <location>
        <position position="78"/>
    </location>
    <ligand>
        <name>Mg(2+)</name>
        <dbReference type="ChEBI" id="CHEBI:18420"/>
        <label>1</label>
    </ligand>
</feature>
<feature type="binding site" evidence="1">
    <location>
        <position position="142"/>
    </location>
    <ligand>
        <name>Mg(2+)</name>
        <dbReference type="ChEBI" id="CHEBI:18420"/>
        <label>2</label>
    </ligand>
</feature>